<organism>
    <name type="scientific">Salmonella paratyphi A (strain AKU_12601)</name>
    <dbReference type="NCBI Taxonomy" id="554290"/>
    <lineage>
        <taxon>Bacteria</taxon>
        <taxon>Pseudomonadati</taxon>
        <taxon>Pseudomonadota</taxon>
        <taxon>Gammaproteobacteria</taxon>
        <taxon>Enterobacterales</taxon>
        <taxon>Enterobacteriaceae</taxon>
        <taxon>Salmonella</taxon>
    </lineage>
</organism>
<name>FLGI_SALPK</name>
<feature type="signal peptide" evidence="1">
    <location>
        <begin position="1"/>
        <end position="19"/>
    </location>
</feature>
<feature type="chain" id="PRO_1000123982" description="Flagellar P-ring protein">
    <location>
        <begin position="20"/>
        <end position="365"/>
    </location>
</feature>
<protein>
    <recommendedName>
        <fullName evidence="1">Flagellar P-ring protein</fullName>
    </recommendedName>
    <alternativeName>
        <fullName evidence="1">Basal body P-ring protein</fullName>
    </alternativeName>
</protein>
<sequence length="365" mass="38168">MFKALAGIVLALVATLAHAERIRDLTSVQGVRENSLIGYGLVVGLDGTGDQTTQTPFTTQTLNNMLSQLGITVPTGTNMQLKNVAAVMVTASYPPFARQGQTIDVVVSSMGNAKSLRGGTLLMTPLKGVDSQVYALAQGNILVGGAGASAGGSSVQVNQLNGGRITNGAIIERELPTQFGAGNTINLQLNDEDFTMAQQITDAINRARGYGSATALDARTVQVRVPSGNSSQVRFLADIQNMEVNVTPQDAKVVINSRTGSVVMNREVTLDSCAVAQGNLSVTVNRQLNVNQPNTPFGGGQTVVTPQTQIDLRQSGGSLQSVRSSANLNSVVRALNALGATPMDLMSILQSMQSAGCLRAKLEII</sequence>
<reference key="1">
    <citation type="journal article" date="2009" name="BMC Genomics">
        <title>Pseudogene accumulation in the evolutionary histories of Salmonella enterica serovars Paratyphi A and Typhi.</title>
        <authorList>
            <person name="Holt K.E."/>
            <person name="Thomson N.R."/>
            <person name="Wain J."/>
            <person name="Langridge G.C."/>
            <person name="Hasan R."/>
            <person name="Bhutta Z.A."/>
            <person name="Quail M.A."/>
            <person name="Norbertczak H."/>
            <person name="Walker D."/>
            <person name="Simmonds M."/>
            <person name="White B."/>
            <person name="Bason N."/>
            <person name="Mungall K."/>
            <person name="Dougan G."/>
            <person name="Parkhill J."/>
        </authorList>
    </citation>
    <scope>NUCLEOTIDE SEQUENCE [LARGE SCALE GENOMIC DNA]</scope>
    <source>
        <strain>AKU_12601</strain>
    </source>
</reference>
<dbReference type="EMBL" id="FM200053">
    <property type="protein sequence ID" value="CAR59737.1"/>
    <property type="molecule type" value="Genomic_DNA"/>
</dbReference>
<dbReference type="RefSeq" id="WP_001518955.1">
    <property type="nucleotide sequence ID" value="NC_011147.1"/>
</dbReference>
<dbReference type="SMR" id="B5BAJ3"/>
<dbReference type="KEGG" id="sek:SSPA1552"/>
<dbReference type="HOGENOM" id="CLU_045235_1_0_6"/>
<dbReference type="Proteomes" id="UP000001869">
    <property type="component" value="Chromosome"/>
</dbReference>
<dbReference type="GO" id="GO:0009428">
    <property type="term" value="C:bacterial-type flagellum basal body, distal rod, P ring"/>
    <property type="evidence" value="ECO:0007669"/>
    <property type="project" value="InterPro"/>
</dbReference>
<dbReference type="GO" id="GO:0030288">
    <property type="term" value="C:outer membrane-bounded periplasmic space"/>
    <property type="evidence" value="ECO:0007669"/>
    <property type="project" value="InterPro"/>
</dbReference>
<dbReference type="GO" id="GO:0005198">
    <property type="term" value="F:structural molecule activity"/>
    <property type="evidence" value="ECO:0007669"/>
    <property type="project" value="InterPro"/>
</dbReference>
<dbReference type="GO" id="GO:0071973">
    <property type="term" value="P:bacterial-type flagellum-dependent cell motility"/>
    <property type="evidence" value="ECO:0007669"/>
    <property type="project" value="InterPro"/>
</dbReference>
<dbReference type="HAMAP" id="MF_00416">
    <property type="entry name" value="FlgI"/>
    <property type="match status" value="1"/>
</dbReference>
<dbReference type="InterPro" id="IPR001782">
    <property type="entry name" value="Flag_FlgI"/>
</dbReference>
<dbReference type="NCBIfam" id="NF003676">
    <property type="entry name" value="PRK05303.1"/>
    <property type="match status" value="1"/>
</dbReference>
<dbReference type="PANTHER" id="PTHR30381">
    <property type="entry name" value="FLAGELLAR P-RING PERIPLASMIC PROTEIN FLGI"/>
    <property type="match status" value="1"/>
</dbReference>
<dbReference type="PANTHER" id="PTHR30381:SF0">
    <property type="entry name" value="FLAGELLAR P-RING PROTEIN"/>
    <property type="match status" value="1"/>
</dbReference>
<dbReference type="Pfam" id="PF02119">
    <property type="entry name" value="FlgI"/>
    <property type="match status" value="1"/>
</dbReference>
<dbReference type="PRINTS" id="PR01010">
    <property type="entry name" value="FLGPRINGFLGI"/>
</dbReference>
<comment type="function">
    <text evidence="1">Assembles around the rod to form the L-ring and probably protects the motor/basal body from shearing forces during rotation.</text>
</comment>
<comment type="subunit">
    <text evidence="1">The basal body constitutes a major portion of the flagellar organelle and consists of four rings (L,P,S, and M) mounted on a central rod.</text>
</comment>
<comment type="subcellular location">
    <subcellularLocation>
        <location evidence="1">Periplasm</location>
    </subcellularLocation>
    <subcellularLocation>
        <location evidence="1">Bacterial flagellum basal body</location>
    </subcellularLocation>
</comment>
<comment type="similarity">
    <text evidence="1">Belongs to the FlgI family.</text>
</comment>
<gene>
    <name evidence="1" type="primary">flgI</name>
    <name type="ordered locus">SSPA1552</name>
</gene>
<accession>B5BAJ3</accession>
<evidence type="ECO:0000255" key="1">
    <source>
        <dbReference type="HAMAP-Rule" id="MF_00416"/>
    </source>
</evidence>
<proteinExistence type="inferred from homology"/>
<keyword id="KW-0975">Bacterial flagellum</keyword>
<keyword id="KW-0574">Periplasm</keyword>
<keyword id="KW-0732">Signal</keyword>